<proteinExistence type="inferred from homology"/>
<gene>
    <name evidence="1" type="primary">rpsE</name>
    <name type="ordered locus">SAV2233</name>
</gene>
<sequence length="166" mass="17742">MARREEETKEFEERVVTINRVAKVVKGGRRFRFTALVVVGDKNGRVGFGTGKAQEVPEAIKKAVEAAKKDLVVVPRVEGTTPHTITGRYGSGSVFMKPAAPGTGVIAGGPVRAVLELAGITDILSKSLGSNTPINMVRATIDGLQNLKNAEDVAKLRGKTVEELYN</sequence>
<comment type="function">
    <text evidence="1">With S4 and S12 plays an important role in translational accuracy.</text>
</comment>
<comment type="function">
    <text evidence="1">Located at the back of the 30S subunit body where it stabilizes the conformation of the head with respect to the body.</text>
</comment>
<comment type="subunit">
    <text evidence="1">Part of the 30S ribosomal subunit. Contacts proteins S4 and S8.</text>
</comment>
<comment type="domain">
    <text>The N-terminal domain interacts with the head of the 30S subunit; the C-terminal domain interacts with the body and contacts protein S4. The interaction surface between S4 and S5 is involved in control of translational fidelity.</text>
</comment>
<comment type="similarity">
    <text evidence="1">Belongs to the universal ribosomal protein uS5 family.</text>
</comment>
<protein>
    <recommendedName>
        <fullName evidence="1">Small ribosomal subunit protein uS5</fullName>
    </recommendedName>
    <alternativeName>
        <fullName evidence="2">30S ribosomal protein S5</fullName>
    </alternativeName>
</protein>
<organism>
    <name type="scientific">Staphylococcus aureus (strain Mu50 / ATCC 700699)</name>
    <dbReference type="NCBI Taxonomy" id="158878"/>
    <lineage>
        <taxon>Bacteria</taxon>
        <taxon>Bacillati</taxon>
        <taxon>Bacillota</taxon>
        <taxon>Bacilli</taxon>
        <taxon>Bacillales</taxon>
        <taxon>Staphylococcaceae</taxon>
        <taxon>Staphylococcus</taxon>
    </lineage>
</organism>
<evidence type="ECO:0000255" key="1">
    <source>
        <dbReference type="HAMAP-Rule" id="MF_01307"/>
    </source>
</evidence>
<evidence type="ECO:0000305" key="2"/>
<accession>P66578</accession>
<accession>Q99S38</accession>
<name>RS5_STAAM</name>
<reference key="1">
    <citation type="journal article" date="2001" name="Lancet">
        <title>Whole genome sequencing of meticillin-resistant Staphylococcus aureus.</title>
        <authorList>
            <person name="Kuroda M."/>
            <person name="Ohta T."/>
            <person name="Uchiyama I."/>
            <person name="Baba T."/>
            <person name="Yuzawa H."/>
            <person name="Kobayashi I."/>
            <person name="Cui L."/>
            <person name="Oguchi A."/>
            <person name="Aoki K."/>
            <person name="Nagai Y."/>
            <person name="Lian J.-Q."/>
            <person name="Ito T."/>
            <person name="Kanamori M."/>
            <person name="Matsumaru H."/>
            <person name="Maruyama A."/>
            <person name="Murakami H."/>
            <person name="Hosoyama A."/>
            <person name="Mizutani-Ui Y."/>
            <person name="Takahashi N.K."/>
            <person name="Sawano T."/>
            <person name="Inoue R."/>
            <person name="Kaito C."/>
            <person name="Sekimizu K."/>
            <person name="Hirakawa H."/>
            <person name="Kuhara S."/>
            <person name="Goto S."/>
            <person name="Yabuzaki J."/>
            <person name="Kanehisa M."/>
            <person name="Yamashita A."/>
            <person name="Oshima K."/>
            <person name="Furuya K."/>
            <person name="Yoshino C."/>
            <person name="Shiba T."/>
            <person name="Hattori M."/>
            <person name="Ogasawara N."/>
            <person name="Hayashi H."/>
            <person name="Hiramatsu K."/>
        </authorList>
    </citation>
    <scope>NUCLEOTIDE SEQUENCE [LARGE SCALE GENOMIC DNA]</scope>
    <source>
        <strain>Mu50 / ATCC 700699</strain>
    </source>
</reference>
<feature type="chain" id="PRO_0000131594" description="Small ribosomal subunit protein uS5">
    <location>
        <begin position="1"/>
        <end position="166"/>
    </location>
</feature>
<feature type="domain" description="S5 DRBM" evidence="1">
    <location>
        <begin position="11"/>
        <end position="74"/>
    </location>
</feature>
<keyword id="KW-0687">Ribonucleoprotein</keyword>
<keyword id="KW-0689">Ribosomal protein</keyword>
<keyword id="KW-0694">RNA-binding</keyword>
<keyword id="KW-0699">rRNA-binding</keyword>
<dbReference type="EMBL" id="BA000017">
    <property type="protein sequence ID" value="BAB58395.1"/>
    <property type="molecule type" value="Genomic_DNA"/>
</dbReference>
<dbReference type="RefSeq" id="WP_000113851.1">
    <property type="nucleotide sequence ID" value="NC_002758.2"/>
</dbReference>
<dbReference type="SMR" id="P66578"/>
<dbReference type="KEGG" id="sav:SAV2233"/>
<dbReference type="HOGENOM" id="CLU_065898_2_2_9"/>
<dbReference type="PhylomeDB" id="P66578"/>
<dbReference type="Proteomes" id="UP000002481">
    <property type="component" value="Chromosome"/>
</dbReference>
<dbReference type="GO" id="GO:0015935">
    <property type="term" value="C:small ribosomal subunit"/>
    <property type="evidence" value="ECO:0007669"/>
    <property type="project" value="InterPro"/>
</dbReference>
<dbReference type="GO" id="GO:0019843">
    <property type="term" value="F:rRNA binding"/>
    <property type="evidence" value="ECO:0007669"/>
    <property type="project" value="UniProtKB-UniRule"/>
</dbReference>
<dbReference type="GO" id="GO:0003735">
    <property type="term" value="F:structural constituent of ribosome"/>
    <property type="evidence" value="ECO:0007669"/>
    <property type="project" value="InterPro"/>
</dbReference>
<dbReference type="GO" id="GO:0006412">
    <property type="term" value="P:translation"/>
    <property type="evidence" value="ECO:0007669"/>
    <property type="project" value="UniProtKB-UniRule"/>
</dbReference>
<dbReference type="FunFam" id="3.30.160.20:FF:000001">
    <property type="entry name" value="30S ribosomal protein S5"/>
    <property type="match status" value="1"/>
</dbReference>
<dbReference type="FunFam" id="3.30.230.10:FF:000002">
    <property type="entry name" value="30S ribosomal protein S5"/>
    <property type="match status" value="1"/>
</dbReference>
<dbReference type="Gene3D" id="3.30.160.20">
    <property type="match status" value="1"/>
</dbReference>
<dbReference type="Gene3D" id="3.30.230.10">
    <property type="match status" value="1"/>
</dbReference>
<dbReference type="HAMAP" id="MF_01307_B">
    <property type="entry name" value="Ribosomal_uS5_B"/>
    <property type="match status" value="1"/>
</dbReference>
<dbReference type="InterPro" id="IPR020568">
    <property type="entry name" value="Ribosomal_Su5_D2-typ_SF"/>
</dbReference>
<dbReference type="InterPro" id="IPR000851">
    <property type="entry name" value="Ribosomal_uS5"/>
</dbReference>
<dbReference type="InterPro" id="IPR005712">
    <property type="entry name" value="Ribosomal_uS5_bac-type"/>
</dbReference>
<dbReference type="InterPro" id="IPR005324">
    <property type="entry name" value="Ribosomal_uS5_C"/>
</dbReference>
<dbReference type="InterPro" id="IPR013810">
    <property type="entry name" value="Ribosomal_uS5_N"/>
</dbReference>
<dbReference type="InterPro" id="IPR018192">
    <property type="entry name" value="Ribosomal_uS5_N_CS"/>
</dbReference>
<dbReference type="InterPro" id="IPR014721">
    <property type="entry name" value="Ribsml_uS5_D2-typ_fold_subgr"/>
</dbReference>
<dbReference type="NCBIfam" id="TIGR01021">
    <property type="entry name" value="rpsE_bact"/>
    <property type="match status" value="1"/>
</dbReference>
<dbReference type="PANTHER" id="PTHR48277">
    <property type="entry name" value="MITOCHONDRIAL RIBOSOMAL PROTEIN S5"/>
    <property type="match status" value="1"/>
</dbReference>
<dbReference type="PANTHER" id="PTHR48277:SF1">
    <property type="entry name" value="MITOCHONDRIAL RIBOSOMAL PROTEIN S5"/>
    <property type="match status" value="1"/>
</dbReference>
<dbReference type="Pfam" id="PF00333">
    <property type="entry name" value="Ribosomal_S5"/>
    <property type="match status" value="1"/>
</dbReference>
<dbReference type="Pfam" id="PF03719">
    <property type="entry name" value="Ribosomal_S5_C"/>
    <property type="match status" value="1"/>
</dbReference>
<dbReference type="SUPFAM" id="SSF54768">
    <property type="entry name" value="dsRNA-binding domain-like"/>
    <property type="match status" value="1"/>
</dbReference>
<dbReference type="SUPFAM" id="SSF54211">
    <property type="entry name" value="Ribosomal protein S5 domain 2-like"/>
    <property type="match status" value="1"/>
</dbReference>
<dbReference type="PROSITE" id="PS00585">
    <property type="entry name" value="RIBOSOMAL_S5"/>
    <property type="match status" value="1"/>
</dbReference>
<dbReference type="PROSITE" id="PS50881">
    <property type="entry name" value="S5_DSRBD"/>
    <property type="match status" value="1"/>
</dbReference>